<feature type="chain" id="PRO_0000142552" description="3'-phosphoadenosine 5'-phosphate phosphatase">
    <location>
        <begin position="1"/>
        <end position="267"/>
    </location>
</feature>
<feature type="binding site" evidence="1">
    <location>
        <position position="73"/>
    </location>
    <ligand>
        <name>Mg(2+)</name>
        <dbReference type="ChEBI" id="CHEBI:18420"/>
        <label>1</label>
    </ligand>
</feature>
<feature type="binding site" evidence="1">
    <location>
        <position position="73"/>
    </location>
    <ligand>
        <name>substrate</name>
    </ligand>
</feature>
<feature type="binding site" evidence="1">
    <location>
        <position position="91"/>
    </location>
    <ligand>
        <name>Mg(2+)</name>
        <dbReference type="ChEBI" id="CHEBI:18420"/>
        <label>1</label>
    </ligand>
</feature>
<feature type="binding site" evidence="1">
    <location>
        <position position="91"/>
    </location>
    <ligand>
        <name>Mg(2+)</name>
        <dbReference type="ChEBI" id="CHEBI:18420"/>
        <label>2</label>
    </ligand>
</feature>
<feature type="binding site" evidence="1">
    <location>
        <begin position="93"/>
        <end position="96"/>
    </location>
    <ligand>
        <name>substrate</name>
    </ligand>
</feature>
<feature type="binding site" evidence="1">
    <location>
        <position position="93"/>
    </location>
    <ligand>
        <name>Mg(2+)</name>
        <dbReference type="ChEBI" id="CHEBI:18420"/>
        <label>1</label>
    </ligand>
</feature>
<feature type="binding site" evidence="1">
    <location>
        <position position="94"/>
    </location>
    <ligand>
        <name>Mg(2+)</name>
        <dbReference type="ChEBI" id="CHEBI:18420"/>
        <label>2</label>
    </ligand>
</feature>
<feature type="binding site" evidence="1">
    <location>
        <position position="212"/>
    </location>
    <ligand>
        <name>Mg(2+)</name>
        <dbReference type="ChEBI" id="CHEBI:18420"/>
        <label>2</label>
    </ligand>
</feature>
<feature type="binding site" evidence="1">
    <location>
        <position position="212"/>
    </location>
    <ligand>
        <name>substrate</name>
    </ligand>
</feature>
<proteinExistence type="inferred from homology"/>
<dbReference type="EC" id="3.1.3.7"/>
<dbReference type="EC" id="3.1.3.11"/>
<dbReference type="EC" id="3.1.3.25"/>
<dbReference type="EMBL" id="LT708304">
    <property type="protein sequence ID" value="SIU00762.1"/>
    <property type="molecule type" value="Genomic_DNA"/>
</dbReference>
<dbReference type="RefSeq" id="NP_855804.1">
    <property type="nucleotide sequence ID" value="NC_002945.3"/>
</dbReference>
<dbReference type="RefSeq" id="WP_003411096.1">
    <property type="nucleotide sequence ID" value="NC_002945.4"/>
</dbReference>
<dbReference type="SMR" id="P65164"/>
<dbReference type="GeneID" id="45426106"/>
<dbReference type="KEGG" id="mbo:BQ2027_MB2155C"/>
<dbReference type="PATRIC" id="fig|233413.5.peg.2369"/>
<dbReference type="UniPathway" id="UPA00097"/>
<dbReference type="Proteomes" id="UP000001419">
    <property type="component" value="Chromosome"/>
</dbReference>
<dbReference type="GO" id="GO:0008441">
    <property type="term" value="F:3'(2'),5'-bisphosphate nucleotidase activity"/>
    <property type="evidence" value="ECO:0007669"/>
    <property type="project" value="UniProtKB-EC"/>
</dbReference>
<dbReference type="GO" id="GO:0042132">
    <property type="term" value="F:fructose 1,6-bisphosphate 1-phosphatase activity"/>
    <property type="evidence" value="ECO:0007669"/>
    <property type="project" value="UniProtKB-EC"/>
</dbReference>
<dbReference type="GO" id="GO:0052834">
    <property type="term" value="F:inositol monophosphate phosphatase activity"/>
    <property type="evidence" value="ECO:0007669"/>
    <property type="project" value="UniProtKB-EC"/>
</dbReference>
<dbReference type="GO" id="GO:0046872">
    <property type="term" value="F:metal ion binding"/>
    <property type="evidence" value="ECO:0007669"/>
    <property type="project" value="UniProtKB-KW"/>
</dbReference>
<dbReference type="GO" id="GO:0050427">
    <property type="term" value="P:3'-phosphoadenosine 5'-phosphosulfate metabolic process"/>
    <property type="evidence" value="ECO:0007669"/>
    <property type="project" value="TreeGrafter"/>
</dbReference>
<dbReference type="GO" id="GO:0000103">
    <property type="term" value="P:sulfate assimilation"/>
    <property type="evidence" value="ECO:0007669"/>
    <property type="project" value="UniProtKB-UniPathway"/>
</dbReference>
<dbReference type="CDD" id="cd01638">
    <property type="entry name" value="CysQ"/>
    <property type="match status" value="1"/>
</dbReference>
<dbReference type="FunFam" id="3.30.540.10:FF:000029">
    <property type="entry name" value="3'-phosphoadenosine 5'-phosphate phosphatase"/>
    <property type="match status" value="1"/>
</dbReference>
<dbReference type="FunFam" id="3.40.190.80:FF:000026">
    <property type="entry name" value="3'-phosphoadenosine 5'-phosphate phosphatase"/>
    <property type="match status" value="1"/>
</dbReference>
<dbReference type="Gene3D" id="3.40.190.80">
    <property type="match status" value="1"/>
</dbReference>
<dbReference type="Gene3D" id="3.30.540.10">
    <property type="entry name" value="Fructose-1,6-Bisphosphatase, subunit A, domain 1"/>
    <property type="match status" value="1"/>
</dbReference>
<dbReference type="InterPro" id="IPR050725">
    <property type="entry name" value="CysQ/Inositol_MonoPase"/>
</dbReference>
<dbReference type="InterPro" id="IPR020583">
    <property type="entry name" value="Inositol_monoP_metal-BS"/>
</dbReference>
<dbReference type="InterPro" id="IPR000760">
    <property type="entry name" value="Inositol_monophosphatase-like"/>
</dbReference>
<dbReference type="PANTHER" id="PTHR43028">
    <property type="entry name" value="3'(2'),5'-BISPHOSPHATE NUCLEOTIDASE 1"/>
    <property type="match status" value="1"/>
</dbReference>
<dbReference type="PANTHER" id="PTHR43028:SF5">
    <property type="entry name" value="3'(2'),5'-BISPHOSPHATE NUCLEOTIDASE 1"/>
    <property type="match status" value="1"/>
</dbReference>
<dbReference type="Pfam" id="PF00459">
    <property type="entry name" value="Inositol_P"/>
    <property type="match status" value="1"/>
</dbReference>
<dbReference type="SUPFAM" id="SSF56655">
    <property type="entry name" value="Carbohydrate phosphatase"/>
    <property type="match status" value="1"/>
</dbReference>
<dbReference type="PROSITE" id="PS00629">
    <property type="entry name" value="IMP_1"/>
    <property type="match status" value="1"/>
</dbReference>
<protein>
    <recommendedName>
        <fullName>3'-phosphoadenosine 5'-phosphate phosphatase</fullName>
        <shortName>PAP phosphatase</shortName>
        <ecNumber>3.1.3.7</ecNumber>
    </recommendedName>
    <alternativeName>
        <fullName>3'(2'),5'-bisphosphate nucleotidase</fullName>
    </alternativeName>
    <alternativeName>
        <fullName>3'(2'),5-bisphosphonucleoside 3'(2')-phosphohydrolase</fullName>
    </alternativeName>
    <alternativeName>
        <fullName>D-fructose-1,6-bisphosphate 1-phosphohydrolase</fullName>
    </alternativeName>
    <alternativeName>
        <fullName>DPNPase</fullName>
    </alternativeName>
    <alternativeName>
        <fullName>Fructose-1,6-bisphosphatase</fullName>
        <shortName>FBPase</shortName>
        <ecNumber>3.1.3.11</ecNumber>
    </alternativeName>
    <alternativeName>
        <fullName>Inositol-1-monophosphatase</fullName>
        <shortName>I-1-Pase</shortName>
        <shortName>IMPase</shortName>
        <ecNumber>3.1.3.25</ecNumber>
    </alternativeName>
    <alternativeName>
        <fullName>Inositol-1-phosphatase</fullName>
    </alternativeName>
</protein>
<sequence>MVSPAAPDLTDDLTDAELAADLAADAGKLLLQVRAEIGFDQPWTLGEAGDRQANSLLLRRLQAERPGDAVLSEEAHDDLARLKSDRVWIIDPLDGTREFSTPGRDDWAVHIALWRRSSNGQPEITDAAVALPARGNVVYRTDTVTSGAAPAGVPGTLRIAVSATRPPAVLHRIRQTLAIQPVSIGSAGAKAMAVIDGYVDAYLHAGGQWEWDSAAPAGVMLAAGMHASRLDGSPLRYNQLDPYLPDLLMCRAEVAPILLGAIADAWR</sequence>
<reference key="1">
    <citation type="journal article" date="2003" name="Proc. Natl. Acad. Sci. U.S.A.">
        <title>The complete genome sequence of Mycobacterium bovis.</title>
        <authorList>
            <person name="Garnier T."/>
            <person name="Eiglmeier K."/>
            <person name="Camus J.-C."/>
            <person name="Medina N."/>
            <person name="Mansoor H."/>
            <person name="Pryor M."/>
            <person name="Duthoy S."/>
            <person name="Grondin S."/>
            <person name="Lacroix C."/>
            <person name="Monsempe C."/>
            <person name="Simon S."/>
            <person name="Harris B."/>
            <person name="Atkin R."/>
            <person name="Doggett J."/>
            <person name="Mayes R."/>
            <person name="Keating L."/>
            <person name="Wheeler P.R."/>
            <person name="Parkhill J."/>
            <person name="Barrell B.G."/>
            <person name="Cole S.T."/>
            <person name="Gordon S.V."/>
            <person name="Hewinson R.G."/>
        </authorList>
    </citation>
    <scope>NUCLEOTIDE SEQUENCE [LARGE SCALE GENOMIC DNA]</scope>
    <source>
        <strain>ATCC BAA-935 / AF2122/97</strain>
    </source>
</reference>
<reference key="2">
    <citation type="journal article" date="2017" name="Genome Announc.">
        <title>Updated reference genome sequence and annotation of Mycobacterium bovis AF2122/97.</title>
        <authorList>
            <person name="Malone K.M."/>
            <person name="Farrell D."/>
            <person name="Stuber T.P."/>
            <person name="Schubert O.T."/>
            <person name="Aebersold R."/>
            <person name="Robbe-Austerman S."/>
            <person name="Gordon S.V."/>
        </authorList>
    </citation>
    <scope>NUCLEOTIDE SEQUENCE [LARGE SCALE GENOMIC DNA]</scope>
    <scope>GENOME REANNOTATION</scope>
    <source>
        <strain>ATCC BAA-935 / AF2122/97</strain>
    </source>
</reference>
<gene>
    <name type="primary">cysQ</name>
    <name type="ordered locus">BQ2027_MB2155C</name>
</gene>
<accession>P65164</accession>
<accession>A0A1R3Y0D2</accession>
<accession>O06244</accession>
<accession>X2BK83</accession>
<organism>
    <name type="scientific">Mycobacterium bovis (strain ATCC BAA-935 / AF2122/97)</name>
    <dbReference type="NCBI Taxonomy" id="233413"/>
    <lineage>
        <taxon>Bacteria</taxon>
        <taxon>Bacillati</taxon>
        <taxon>Actinomycetota</taxon>
        <taxon>Actinomycetes</taxon>
        <taxon>Mycobacteriales</taxon>
        <taxon>Mycobacteriaceae</taxon>
        <taxon>Mycobacterium</taxon>
        <taxon>Mycobacterium tuberculosis complex</taxon>
    </lineage>
</organism>
<keyword id="KW-0378">Hydrolase</keyword>
<keyword id="KW-0460">Magnesium</keyword>
<keyword id="KW-0479">Metal-binding</keyword>
<keyword id="KW-1185">Reference proteome</keyword>
<comment type="function">
    <text evidence="1">Phosphatase with a broad specificity. Its primary physiological function is to dephosphorylate 3'-phosphoadenosine 5'-phosphate (PAP) and 3'-phosphoadenosine 5'-phosphosulfate (PAPS). Thus, plays a role in mycobacterial sulfur metabolism, since it can serve as a key regulator of the sulfate assimilation pathway by controlling the pools of PAP and PAPS in the cell. To a lesser extent, is also able to hydrolyze inositol 1-phosphate (I-1-P), fructose 1,6-bisphosphate (FBP) (to fructose 6-phosphate (F-6-P)) and AMP in vitro, but this might not be significant in vivo (By similarity).</text>
</comment>
<comment type="catalytic activity">
    <reaction>
        <text>adenosine 3',5'-bisphosphate + H2O = AMP + phosphate</text>
        <dbReference type="Rhea" id="RHEA:10040"/>
        <dbReference type="ChEBI" id="CHEBI:15377"/>
        <dbReference type="ChEBI" id="CHEBI:43474"/>
        <dbReference type="ChEBI" id="CHEBI:58343"/>
        <dbReference type="ChEBI" id="CHEBI:456215"/>
        <dbReference type="EC" id="3.1.3.7"/>
    </reaction>
</comment>
<comment type="catalytic activity">
    <reaction>
        <text>beta-D-fructose 1,6-bisphosphate + H2O = beta-D-fructose 6-phosphate + phosphate</text>
        <dbReference type="Rhea" id="RHEA:11064"/>
        <dbReference type="ChEBI" id="CHEBI:15377"/>
        <dbReference type="ChEBI" id="CHEBI:32966"/>
        <dbReference type="ChEBI" id="CHEBI:43474"/>
        <dbReference type="ChEBI" id="CHEBI:57634"/>
        <dbReference type="EC" id="3.1.3.11"/>
    </reaction>
</comment>
<comment type="catalytic activity">
    <reaction>
        <text>a myo-inositol phosphate + H2O = myo-inositol + phosphate</text>
        <dbReference type="Rhea" id="RHEA:24056"/>
        <dbReference type="ChEBI" id="CHEBI:15377"/>
        <dbReference type="ChEBI" id="CHEBI:17268"/>
        <dbReference type="ChEBI" id="CHEBI:43474"/>
        <dbReference type="ChEBI" id="CHEBI:84139"/>
        <dbReference type="EC" id="3.1.3.25"/>
    </reaction>
</comment>
<comment type="cofactor">
    <cofactor evidence="1">
        <name>Mg(2+)</name>
        <dbReference type="ChEBI" id="CHEBI:18420"/>
    </cofactor>
</comment>
<comment type="pathway">
    <text>Sulfur metabolism; sulfate assimilation.</text>
</comment>
<comment type="subunit">
    <text evidence="1">Homodimer.</text>
</comment>
<comment type="similarity">
    <text evidence="2">Belongs to the inositol monophosphatase superfamily.</text>
</comment>
<name>CYSQ_MYCBO</name>
<evidence type="ECO:0000250" key="1"/>
<evidence type="ECO:0000305" key="2"/>